<reference key="1">
    <citation type="journal article" date="2005" name="BMC Genomics">
        <title>Bacterial genome adaptation to niches: divergence of the potential virulence genes in three Burkholderia species of different survival strategies.</title>
        <authorList>
            <person name="Kim H.S."/>
            <person name="Schell M.A."/>
            <person name="Yu Y."/>
            <person name="Ulrich R.L."/>
            <person name="Sarria S.H."/>
            <person name="Nierman W.C."/>
            <person name="DeShazer D."/>
        </authorList>
    </citation>
    <scope>NUCLEOTIDE SEQUENCE [LARGE SCALE GENOMIC DNA]</scope>
    <source>
        <strain>ATCC 700388 / DSM 13276 / CCUG 48851 / CIP 106301 / E264</strain>
    </source>
</reference>
<sequence>MAKKIVGFIKLQIPAGKANPSPPVGPALGQRGLNIMEFCKAFNAQTQGMEPGLPVPVVITAYADKSFTFVMKTPPATVLIKKAAKVDKGSSKPHTDKVGKITRAQAEEIAKTKMPDLTAADLDAAVRTIAGSARSMGITVEGV</sequence>
<name>RL11_BURTA</name>
<gene>
    <name evidence="1" type="primary">rplK</name>
    <name type="ordered locus">BTH_I3080</name>
</gene>
<dbReference type="EMBL" id="CP000086">
    <property type="protein sequence ID" value="ABC38563.1"/>
    <property type="molecule type" value="Genomic_DNA"/>
</dbReference>
<dbReference type="RefSeq" id="WP_004198368.1">
    <property type="nucleotide sequence ID" value="NZ_CP008786.1"/>
</dbReference>
<dbReference type="SMR" id="Q2SU15"/>
<dbReference type="GeneID" id="93061845"/>
<dbReference type="KEGG" id="bte:BTH_I3080"/>
<dbReference type="HOGENOM" id="CLU_074237_2_0_4"/>
<dbReference type="Proteomes" id="UP000001930">
    <property type="component" value="Chromosome I"/>
</dbReference>
<dbReference type="GO" id="GO:0022625">
    <property type="term" value="C:cytosolic large ribosomal subunit"/>
    <property type="evidence" value="ECO:0007669"/>
    <property type="project" value="TreeGrafter"/>
</dbReference>
<dbReference type="GO" id="GO:0070180">
    <property type="term" value="F:large ribosomal subunit rRNA binding"/>
    <property type="evidence" value="ECO:0007669"/>
    <property type="project" value="UniProtKB-UniRule"/>
</dbReference>
<dbReference type="GO" id="GO:0003735">
    <property type="term" value="F:structural constituent of ribosome"/>
    <property type="evidence" value="ECO:0007669"/>
    <property type="project" value="InterPro"/>
</dbReference>
<dbReference type="GO" id="GO:0006412">
    <property type="term" value="P:translation"/>
    <property type="evidence" value="ECO:0007669"/>
    <property type="project" value="UniProtKB-UniRule"/>
</dbReference>
<dbReference type="CDD" id="cd00349">
    <property type="entry name" value="Ribosomal_L11"/>
    <property type="match status" value="1"/>
</dbReference>
<dbReference type="FunFam" id="1.10.10.250:FF:000001">
    <property type="entry name" value="50S ribosomal protein L11"/>
    <property type="match status" value="1"/>
</dbReference>
<dbReference type="FunFam" id="3.30.1550.10:FF:000001">
    <property type="entry name" value="50S ribosomal protein L11"/>
    <property type="match status" value="1"/>
</dbReference>
<dbReference type="Gene3D" id="1.10.10.250">
    <property type="entry name" value="Ribosomal protein L11, C-terminal domain"/>
    <property type="match status" value="1"/>
</dbReference>
<dbReference type="Gene3D" id="3.30.1550.10">
    <property type="entry name" value="Ribosomal protein L11/L12, N-terminal domain"/>
    <property type="match status" value="1"/>
</dbReference>
<dbReference type="HAMAP" id="MF_00736">
    <property type="entry name" value="Ribosomal_uL11"/>
    <property type="match status" value="1"/>
</dbReference>
<dbReference type="InterPro" id="IPR000911">
    <property type="entry name" value="Ribosomal_uL11"/>
</dbReference>
<dbReference type="InterPro" id="IPR006519">
    <property type="entry name" value="Ribosomal_uL11_bac-typ"/>
</dbReference>
<dbReference type="InterPro" id="IPR020783">
    <property type="entry name" value="Ribosomal_uL11_C"/>
</dbReference>
<dbReference type="InterPro" id="IPR036769">
    <property type="entry name" value="Ribosomal_uL11_C_sf"/>
</dbReference>
<dbReference type="InterPro" id="IPR020785">
    <property type="entry name" value="Ribosomal_uL11_CS"/>
</dbReference>
<dbReference type="InterPro" id="IPR020784">
    <property type="entry name" value="Ribosomal_uL11_N"/>
</dbReference>
<dbReference type="InterPro" id="IPR036796">
    <property type="entry name" value="Ribosomal_uL11_N_sf"/>
</dbReference>
<dbReference type="NCBIfam" id="TIGR01632">
    <property type="entry name" value="L11_bact"/>
    <property type="match status" value="1"/>
</dbReference>
<dbReference type="PANTHER" id="PTHR11661">
    <property type="entry name" value="60S RIBOSOMAL PROTEIN L12"/>
    <property type="match status" value="1"/>
</dbReference>
<dbReference type="PANTHER" id="PTHR11661:SF1">
    <property type="entry name" value="LARGE RIBOSOMAL SUBUNIT PROTEIN UL11M"/>
    <property type="match status" value="1"/>
</dbReference>
<dbReference type="Pfam" id="PF00298">
    <property type="entry name" value="Ribosomal_L11"/>
    <property type="match status" value="1"/>
</dbReference>
<dbReference type="Pfam" id="PF03946">
    <property type="entry name" value="Ribosomal_L11_N"/>
    <property type="match status" value="1"/>
</dbReference>
<dbReference type="SMART" id="SM00649">
    <property type="entry name" value="RL11"/>
    <property type="match status" value="1"/>
</dbReference>
<dbReference type="SUPFAM" id="SSF54747">
    <property type="entry name" value="Ribosomal L11/L12e N-terminal domain"/>
    <property type="match status" value="1"/>
</dbReference>
<dbReference type="SUPFAM" id="SSF46906">
    <property type="entry name" value="Ribosomal protein L11, C-terminal domain"/>
    <property type="match status" value="1"/>
</dbReference>
<dbReference type="PROSITE" id="PS00359">
    <property type="entry name" value="RIBOSOMAL_L11"/>
    <property type="match status" value="1"/>
</dbReference>
<keyword id="KW-0488">Methylation</keyword>
<keyword id="KW-0687">Ribonucleoprotein</keyword>
<keyword id="KW-0689">Ribosomal protein</keyword>
<keyword id="KW-0694">RNA-binding</keyword>
<keyword id="KW-0699">rRNA-binding</keyword>
<proteinExistence type="inferred from homology"/>
<evidence type="ECO:0000255" key="1">
    <source>
        <dbReference type="HAMAP-Rule" id="MF_00736"/>
    </source>
</evidence>
<evidence type="ECO:0000305" key="2"/>
<comment type="function">
    <text evidence="1">Forms part of the ribosomal stalk which helps the ribosome interact with GTP-bound translation factors.</text>
</comment>
<comment type="subunit">
    <text evidence="1">Part of the ribosomal stalk of the 50S ribosomal subunit. Interacts with L10 and the large rRNA to form the base of the stalk. L10 forms an elongated spine to which L12 dimers bind in a sequential fashion forming a multimeric L10(L12)X complex.</text>
</comment>
<comment type="PTM">
    <text evidence="1">One or more lysine residues are methylated.</text>
</comment>
<comment type="similarity">
    <text evidence="1">Belongs to the universal ribosomal protein uL11 family.</text>
</comment>
<accession>Q2SU15</accession>
<feature type="chain" id="PRO_0000258131" description="Large ribosomal subunit protein uL11">
    <location>
        <begin position="1"/>
        <end position="143"/>
    </location>
</feature>
<organism>
    <name type="scientific">Burkholderia thailandensis (strain ATCC 700388 / DSM 13276 / CCUG 48851 / CIP 106301 / E264)</name>
    <dbReference type="NCBI Taxonomy" id="271848"/>
    <lineage>
        <taxon>Bacteria</taxon>
        <taxon>Pseudomonadati</taxon>
        <taxon>Pseudomonadota</taxon>
        <taxon>Betaproteobacteria</taxon>
        <taxon>Burkholderiales</taxon>
        <taxon>Burkholderiaceae</taxon>
        <taxon>Burkholderia</taxon>
        <taxon>pseudomallei group</taxon>
    </lineage>
</organism>
<protein>
    <recommendedName>
        <fullName evidence="1">Large ribosomal subunit protein uL11</fullName>
    </recommendedName>
    <alternativeName>
        <fullName evidence="2">50S ribosomal protein L11</fullName>
    </alternativeName>
</protein>